<name>GCH4_STAAE</name>
<comment type="function">
    <text evidence="1">Converts GTP to 7,8-dihydroneopterin triphosphate.</text>
</comment>
<comment type="catalytic activity">
    <reaction evidence="1">
        <text>GTP + H2O = 7,8-dihydroneopterin 3'-triphosphate + formate + H(+)</text>
        <dbReference type="Rhea" id="RHEA:17473"/>
        <dbReference type="ChEBI" id="CHEBI:15377"/>
        <dbReference type="ChEBI" id="CHEBI:15378"/>
        <dbReference type="ChEBI" id="CHEBI:15740"/>
        <dbReference type="ChEBI" id="CHEBI:37565"/>
        <dbReference type="ChEBI" id="CHEBI:58462"/>
        <dbReference type="EC" id="3.5.4.16"/>
    </reaction>
</comment>
<comment type="pathway">
    <text evidence="1">Cofactor biosynthesis; 7,8-dihydroneopterin triphosphate biosynthesis; 7,8-dihydroneopterin triphosphate from GTP: step 1/1.</text>
</comment>
<comment type="similarity">
    <text evidence="1">Belongs to the GTP cyclohydrolase IV family.</text>
</comment>
<reference key="1">
    <citation type="journal article" date="2008" name="J. Bacteriol.">
        <title>Genome sequence of Staphylococcus aureus strain Newman and comparative analysis of staphylococcal genomes: polymorphism and evolution of two major pathogenicity islands.</title>
        <authorList>
            <person name="Baba T."/>
            <person name="Bae T."/>
            <person name="Schneewind O."/>
            <person name="Takeuchi F."/>
            <person name="Hiramatsu K."/>
        </authorList>
    </citation>
    <scope>NUCLEOTIDE SEQUENCE [LARGE SCALE GENOMIC DNA]</scope>
    <source>
        <strain>Newman</strain>
    </source>
</reference>
<dbReference type="EC" id="3.5.4.16" evidence="1"/>
<dbReference type="EMBL" id="AP009351">
    <property type="protein sequence ID" value="BAF66801.1"/>
    <property type="molecule type" value="Genomic_DNA"/>
</dbReference>
<dbReference type="RefSeq" id="WP_000134232.1">
    <property type="nucleotide sequence ID" value="NZ_JBBIAE010000002.1"/>
</dbReference>
<dbReference type="SMR" id="A6QEL9"/>
<dbReference type="KEGG" id="sae:NWMN_0529"/>
<dbReference type="HOGENOM" id="CLU_062816_1_1_9"/>
<dbReference type="UniPathway" id="UPA00848">
    <property type="reaction ID" value="UER00151"/>
</dbReference>
<dbReference type="Proteomes" id="UP000006386">
    <property type="component" value="Chromosome"/>
</dbReference>
<dbReference type="GO" id="GO:0003934">
    <property type="term" value="F:GTP cyclohydrolase I activity"/>
    <property type="evidence" value="ECO:0007669"/>
    <property type="project" value="UniProtKB-UniRule"/>
</dbReference>
<dbReference type="GO" id="GO:0046654">
    <property type="term" value="P:tetrahydrofolate biosynthetic process"/>
    <property type="evidence" value="ECO:0007669"/>
    <property type="project" value="UniProtKB-UniRule"/>
</dbReference>
<dbReference type="Gene3D" id="3.10.270.10">
    <property type="entry name" value="Urate Oxidase"/>
    <property type="match status" value="1"/>
</dbReference>
<dbReference type="HAMAP" id="MF_01527_B">
    <property type="entry name" value="GTP_cyclohydrol_B"/>
    <property type="match status" value="1"/>
</dbReference>
<dbReference type="InterPro" id="IPR022838">
    <property type="entry name" value="GTP_cyclohydrolase_FolE2"/>
</dbReference>
<dbReference type="InterPro" id="IPR003801">
    <property type="entry name" value="GTP_cyclohydrolase_FolE2/MptA"/>
</dbReference>
<dbReference type="NCBIfam" id="NF010200">
    <property type="entry name" value="PRK13674.1-1"/>
    <property type="match status" value="1"/>
</dbReference>
<dbReference type="PANTHER" id="PTHR36445">
    <property type="entry name" value="GTP CYCLOHYDROLASE MPTA"/>
    <property type="match status" value="1"/>
</dbReference>
<dbReference type="PANTHER" id="PTHR36445:SF1">
    <property type="entry name" value="GTP CYCLOHYDROLASE MPTA"/>
    <property type="match status" value="1"/>
</dbReference>
<dbReference type="Pfam" id="PF02649">
    <property type="entry name" value="GCHY-1"/>
    <property type="match status" value="1"/>
</dbReference>
<proteinExistence type="inferred from homology"/>
<gene>
    <name evidence="1" type="primary">folE2</name>
    <name type="ordered locus">NWMN_0529</name>
</gene>
<accession>A6QEL9</accession>
<organism>
    <name type="scientific">Staphylococcus aureus (strain Newman)</name>
    <dbReference type="NCBI Taxonomy" id="426430"/>
    <lineage>
        <taxon>Bacteria</taxon>
        <taxon>Bacillati</taxon>
        <taxon>Bacillota</taxon>
        <taxon>Bacilli</taxon>
        <taxon>Bacillales</taxon>
        <taxon>Staphylococcaceae</taxon>
        <taxon>Staphylococcus</taxon>
    </lineage>
</organism>
<evidence type="ECO:0000255" key="1">
    <source>
        <dbReference type="HAMAP-Rule" id="MF_01527"/>
    </source>
</evidence>
<feature type="chain" id="PRO_1000073546" description="GTP cyclohydrolase FolE2">
    <location>
        <begin position="1"/>
        <end position="292"/>
    </location>
</feature>
<feature type="site" description="May be catalytically important" evidence="1">
    <location>
        <position position="176"/>
    </location>
</feature>
<sequence>MTEFDLSTREGRWKHFGSVDPIEGTKPTTKNEMTDLQSTHKDFLFEIEEVGIKNLVYPVLVDQYQTAGTFSFSTSLTKDEKGINMSRIIESVEKHYDNGIELEFNTLYQVLRTLQTNMKQNAAGVDVSGKWFFDRYSPTTNIKAVGNADVTYGLAIDGDKVTRKELTIEATVTTLCPCSKEISEYSAHNQRGVVTVKTYINKDQDIVDDYKNKILDAMEANASSILYPILKRPDEKRVTERAYENPRFVEDLIRLIAADLVEFDWLDGFDIECRNEESIHQHDAFAKLKYRK</sequence>
<keyword id="KW-0378">Hydrolase</keyword>
<protein>
    <recommendedName>
        <fullName evidence="1">GTP cyclohydrolase FolE2</fullName>
        <ecNumber evidence="1">3.5.4.16</ecNumber>
    </recommendedName>
</protein>